<comment type="function">
    <text evidence="1">Essential for recycling GMP and indirectly, cGMP.</text>
</comment>
<comment type="catalytic activity">
    <reaction evidence="1">
        <text>GMP + ATP = GDP + ADP</text>
        <dbReference type="Rhea" id="RHEA:20780"/>
        <dbReference type="ChEBI" id="CHEBI:30616"/>
        <dbReference type="ChEBI" id="CHEBI:58115"/>
        <dbReference type="ChEBI" id="CHEBI:58189"/>
        <dbReference type="ChEBI" id="CHEBI:456216"/>
        <dbReference type="EC" id="2.7.4.8"/>
    </reaction>
</comment>
<comment type="subcellular location">
    <subcellularLocation>
        <location evidence="1">Cytoplasm</location>
    </subcellularLocation>
</comment>
<comment type="similarity">
    <text evidence="1">Belongs to the guanylate kinase family.</text>
</comment>
<evidence type="ECO:0000255" key="1">
    <source>
        <dbReference type="HAMAP-Rule" id="MF_00328"/>
    </source>
</evidence>
<accession>Q1IW06</accession>
<name>KGUA_DEIGD</name>
<keyword id="KW-0067">ATP-binding</keyword>
<keyword id="KW-0963">Cytoplasm</keyword>
<keyword id="KW-0418">Kinase</keyword>
<keyword id="KW-0547">Nucleotide-binding</keyword>
<keyword id="KW-0808">Transferase</keyword>
<reference key="1">
    <citation type="submission" date="2006-04" db="EMBL/GenBank/DDBJ databases">
        <title>Complete sequence of chromosome of Deinococcus geothermalis DSM 11300.</title>
        <authorList>
            <person name="Copeland A."/>
            <person name="Lucas S."/>
            <person name="Lapidus A."/>
            <person name="Barry K."/>
            <person name="Detter J.C."/>
            <person name="Glavina del Rio T."/>
            <person name="Hammon N."/>
            <person name="Israni S."/>
            <person name="Dalin E."/>
            <person name="Tice H."/>
            <person name="Pitluck S."/>
            <person name="Brettin T."/>
            <person name="Bruce D."/>
            <person name="Han C."/>
            <person name="Tapia R."/>
            <person name="Saunders E."/>
            <person name="Gilna P."/>
            <person name="Schmutz J."/>
            <person name="Larimer F."/>
            <person name="Land M."/>
            <person name="Hauser L."/>
            <person name="Kyrpides N."/>
            <person name="Kim E."/>
            <person name="Daly M.J."/>
            <person name="Fredrickson J.K."/>
            <person name="Makarova K.S."/>
            <person name="Gaidamakova E.K."/>
            <person name="Zhai M."/>
            <person name="Richardson P."/>
        </authorList>
    </citation>
    <scope>NUCLEOTIDE SEQUENCE [LARGE SCALE GENOMIC DNA]</scope>
    <source>
        <strain>DSM 11300 / CIP 105573 / AG-3a</strain>
    </source>
</reference>
<gene>
    <name evidence="1" type="primary">gmk</name>
    <name type="ordered locus">Dgeo_2284</name>
</gene>
<protein>
    <recommendedName>
        <fullName evidence="1">Guanylate kinase</fullName>
        <ecNumber evidence="1">2.7.4.8</ecNumber>
    </recommendedName>
    <alternativeName>
        <fullName evidence="1">GMP kinase</fullName>
    </alternativeName>
</protein>
<dbReference type="EC" id="2.7.4.8" evidence="1"/>
<dbReference type="EMBL" id="CP000359">
    <property type="protein sequence ID" value="ABF46578.1"/>
    <property type="molecule type" value="Genomic_DNA"/>
</dbReference>
<dbReference type="SMR" id="Q1IW06"/>
<dbReference type="STRING" id="319795.Dgeo_2284"/>
<dbReference type="KEGG" id="dge:Dgeo_2284"/>
<dbReference type="eggNOG" id="COG0194">
    <property type="taxonomic scope" value="Bacteria"/>
</dbReference>
<dbReference type="HOGENOM" id="CLU_001715_1_1_0"/>
<dbReference type="Proteomes" id="UP000002431">
    <property type="component" value="Chromosome"/>
</dbReference>
<dbReference type="GO" id="GO:0005829">
    <property type="term" value="C:cytosol"/>
    <property type="evidence" value="ECO:0007669"/>
    <property type="project" value="TreeGrafter"/>
</dbReference>
<dbReference type="GO" id="GO:0005524">
    <property type="term" value="F:ATP binding"/>
    <property type="evidence" value="ECO:0007669"/>
    <property type="project" value="UniProtKB-UniRule"/>
</dbReference>
<dbReference type="GO" id="GO:0004385">
    <property type="term" value="F:guanylate kinase activity"/>
    <property type="evidence" value="ECO:0007669"/>
    <property type="project" value="UniProtKB-UniRule"/>
</dbReference>
<dbReference type="CDD" id="cd00071">
    <property type="entry name" value="GMPK"/>
    <property type="match status" value="1"/>
</dbReference>
<dbReference type="FunFam" id="3.40.50.300:FF:000855">
    <property type="entry name" value="Guanylate kinase"/>
    <property type="match status" value="1"/>
</dbReference>
<dbReference type="FunFam" id="3.30.63.10:FF:000002">
    <property type="entry name" value="Guanylate kinase 1"/>
    <property type="match status" value="1"/>
</dbReference>
<dbReference type="Gene3D" id="3.30.63.10">
    <property type="entry name" value="Guanylate Kinase phosphate binding domain"/>
    <property type="match status" value="1"/>
</dbReference>
<dbReference type="Gene3D" id="3.40.50.300">
    <property type="entry name" value="P-loop containing nucleotide triphosphate hydrolases"/>
    <property type="match status" value="1"/>
</dbReference>
<dbReference type="HAMAP" id="MF_00328">
    <property type="entry name" value="Guanylate_kinase"/>
    <property type="match status" value="1"/>
</dbReference>
<dbReference type="InterPro" id="IPR008145">
    <property type="entry name" value="GK/Ca_channel_bsu"/>
</dbReference>
<dbReference type="InterPro" id="IPR008144">
    <property type="entry name" value="Guanylate_kin-like_dom"/>
</dbReference>
<dbReference type="InterPro" id="IPR017665">
    <property type="entry name" value="Guanylate_kinase"/>
</dbReference>
<dbReference type="InterPro" id="IPR020590">
    <property type="entry name" value="Guanylate_kinase_CS"/>
</dbReference>
<dbReference type="InterPro" id="IPR027417">
    <property type="entry name" value="P-loop_NTPase"/>
</dbReference>
<dbReference type="NCBIfam" id="TIGR03263">
    <property type="entry name" value="guanyl_kin"/>
    <property type="match status" value="1"/>
</dbReference>
<dbReference type="PANTHER" id="PTHR23117:SF13">
    <property type="entry name" value="GUANYLATE KINASE"/>
    <property type="match status" value="1"/>
</dbReference>
<dbReference type="PANTHER" id="PTHR23117">
    <property type="entry name" value="GUANYLATE KINASE-RELATED"/>
    <property type="match status" value="1"/>
</dbReference>
<dbReference type="Pfam" id="PF00625">
    <property type="entry name" value="Guanylate_kin"/>
    <property type="match status" value="1"/>
</dbReference>
<dbReference type="SMART" id="SM00072">
    <property type="entry name" value="GuKc"/>
    <property type="match status" value="1"/>
</dbReference>
<dbReference type="SUPFAM" id="SSF52540">
    <property type="entry name" value="P-loop containing nucleoside triphosphate hydrolases"/>
    <property type="match status" value="1"/>
</dbReference>
<dbReference type="PROSITE" id="PS00856">
    <property type="entry name" value="GUANYLATE_KINASE_1"/>
    <property type="match status" value="1"/>
</dbReference>
<dbReference type="PROSITE" id="PS50052">
    <property type="entry name" value="GUANYLATE_KINASE_2"/>
    <property type="match status" value="1"/>
</dbReference>
<sequence length="242" mass="27315">MLPSMMVARPDPQTTSSSSHRGLLIVMTGASGVGKGTLRERWLAGQDVFYSTSWTTREARPGERDGVDYVFVTPEVFLEKVRQNGFLEHAQFVGNHYGTPTEPIEAALARGQDVVLEIEVEGAMQVKERMGEEAVLVFIMPPSLTELRRRLTGRATETPERIEKRLQRARDEIMAAHAFRYVIVNDDLDRAVRELQAVQRAEHARQRPETEWTAEDRAAVQLAETVRSTVLTTEDLQRIVNS</sequence>
<organism>
    <name type="scientific">Deinococcus geothermalis (strain DSM 11300 / CIP 105573 / AG-3a)</name>
    <dbReference type="NCBI Taxonomy" id="319795"/>
    <lineage>
        <taxon>Bacteria</taxon>
        <taxon>Thermotogati</taxon>
        <taxon>Deinococcota</taxon>
        <taxon>Deinococci</taxon>
        <taxon>Deinococcales</taxon>
        <taxon>Deinococcaceae</taxon>
        <taxon>Deinococcus</taxon>
    </lineage>
</organism>
<proteinExistence type="inferred from homology"/>
<feature type="chain" id="PRO_0000266316" description="Guanylate kinase">
    <location>
        <begin position="1"/>
        <end position="242"/>
    </location>
</feature>
<feature type="domain" description="Guanylate kinase-like" evidence="1">
    <location>
        <begin position="22"/>
        <end position="200"/>
    </location>
</feature>
<feature type="binding site" evidence="1">
    <location>
        <begin position="29"/>
        <end position="36"/>
    </location>
    <ligand>
        <name>ATP</name>
        <dbReference type="ChEBI" id="CHEBI:30616"/>
    </ligand>
</feature>